<keyword id="KW-0119">Carbohydrate metabolism</keyword>
<keyword id="KW-1015">Disulfide bond</keyword>
<keyword id="KW-0325">Glycoprotein</keyword>
<keyword id="KW-0326">Glycosidase</keyword>
<keyword id="KW-0378">Hydrolase</keyword>
<keyword id="KW-0624">Polysaccharide degradation</keyword>
<keyword id="KW-1185">Reference proteome</keyword>
<keyword id="KW-0964">Secreted</keyword>
<keyword id="KW-0732">Signal</keyword>
<dbReference type="EC" id="3.2.1.23"/>
<dbReference type="EMBL" id="AAHF01000004">
    <property type="protein sequence ID" value="EAL90749.1"/>
    <property type="status" value="ALT_SEQ"/>
    <property type="molecule type" value="Genomic_DNA"/>
</dbReference>
<dbReference type="RefSeq" id="XP_752787.1">
    <property type="nucleotide sequence ID" value="XM_747694.1"/>
</dbReference>
<dbReference type="SMR" id="Q4WS33"/>
<dbReference type="STRING" id="330879.Q4WS33"/>
<dbReference type="GlyCosmos" id="Q4WS33">
    <property type="glycosylation" value="8 sites, No reported glycans"/>
</dbReference>
<dbReference type="GeneID" id="3509797"/>
<dbReference type="KEGG" id="afm:AFUA_1G14170"/>
<dbReference type="VEuPathDB" id="FungiDB:Afu1g14170"/>
<dbReference type="eggNOG" id="KOG0496">
    <property type="taxonomic scope" value="Eukaryota"/>
</dbReference>
<dbReference type="HOGENOM" id="CLU_005732_2_0_1"/>
<dbReference type="InParanoid" id="Q4WS33"/>
<dbReference type="OrthoDB" id="1657402at2759"/>
<dbReference type="Proteomes" id="UP000002530">
    <property type="component" value="Chromosome 1"/>
</dbReference>
<dbReference type="GO" id="GO:0005576">
    <property type="term" value="C:extracellular region"/>
    <property type="evidence" value="ECO:0007669"/>
    <property type="project" value="UniProtKB-SubCell"/>
</dbReference>
<dbReference type="GO" id="GO:0005773">
    <property type="term" value="C:vacuole"/>
    <property type="evidence" value="ECO:0000318"/>
    <property type="project" value="GO_Central"/>
</dbReference>
<dbReference type="GO" id="GO:0004565">
    <property type="term" value="F:beta-galactosidase activity"/>
    <property type="evidence" value="ECO:0000318"/>
    <property type="project" value="GO_Central"/>
</dbReference>
<dbReference type="GO" id="GO:0019388">
    <property type="term" value="P:galactose catabolic process"/>
    <property type="evidence" value="ECO:0000318"/>
    <property type="project" value="GO_Central"/>
</dbReference>
<dbReference type="GO" id="GO:0000272">
    <property type="term" value="P:polysaccharide catabolic process"/>
    <property type="evidence" value="ECO:0007669"/>
    <property type="project" value="UniProtKB-KW"/>
</dbReference>
<dbReference type="FunFam" id="2.102.20.10:FF:000001">
    <property type="entry name" value="Beta-galactosidase A"/>
    <property type="match status" value="1"/>
</dbReference>
<dbReference type="FunFam" id="2.60.120.260:FF:000065">
    <property type="entry name" value="Beta-galactosidase A"/>
    <property type="match status" value="1"/>
</dbReference>
<dbReference type="FunFam" id="2.60.120.260:FF:000088">
    <property type="entry name" value="Beta-galactosidase A"/>
    <property type="match status" value="1"/>
</dbReference>
<dbReference type="FunFam" id="2.60.390.10:FF:000001">
    <property type="entry name" value="Beta-galactosidase A"/>
    <property type="match status" value="1"/>
</dbReference>
<dbReference type="FunFam" id="3.20.20.80:FF:000040">
    <property type="entry name" value="Beta-galactosidase A"/>
    <property type="match status" value="1"/>
</dbReference>
<dbReference type="Gene3D" id="2.102.20.10">
    <property type="entry name" value="Beta-galactosidase, domain 2"/>
    <property type="match status" value="1"/>
</dbReference>
<dbReference type="Gene3D" id="2.60.390.10">
    <property type="entry name" value="Beta-galactosidase, domain 3"/>
    <property type="match status" value="1"/>
</dbReference>
<dbReference type="Gene3D" id="2.60.120.260">
    <property type="entry name" value="Galactose-binding domain-like"/>
    <property type="match status" value="2"/>
</dbReference>
<dbReference type="Gene3D" id="3.20.20.80">
    <property type="entry name" value="Glycosidases"/>
    <property type="match status" value="1"/>
</dbReference>
<dbReference type="InterPro" id="IPR018954">
    <property type="entry name" value="Betagal_dom2"/>
</dbReference>
<dbReference type="InterPro" id="IPR037110">
    <property type="entry name" value="Betagal_dom2_sf"/>
</dbReference>
<dbReference type="InterPro" id="IPR025972">
    <property type="entry name" value="BetaGal_dom3"/>
</dbReference>
<dbReference type="InterPro" id="IPR036833">
    <property type="entry name" value="BetaGal_dom3_sf"/>
</dbReference>
<dbReference type="InterPro" id="IPR025300">
    <property type="entry name" value="BetaGal_jelly_roll_dom"/>
</dbReference>
<dbReference type="InterPro" id="IPR008979">
    <property type="entry name" value="Galactose-bd-like_sf"/>
</dbReference>
<dbReference type="InterPro" id="IPR031330">
    <property type="entry name" value="Gly_Hdrlase_35_cat"/>
</dbReference>
<dbReference type="InterPro" id="IPR019801">
    <property type="entry name" value="Glyco_hydro_35_CS"/>
</dbReference>
<dbReference type="InterPro" id="IPR001944">
    <property type="entry name" value="Glycoside_Hdrlase_35"/>
</dbReference>
<dbReference type="InterPro" id="IPR017853">
    <property type="entry name" value="Glycoside_hydrolase_SF"/>
</dbReference>
<dbReference type="PANTHER" id="PTHR23421">
    <property type="entry name" value="BETA-GALACTOSIDASE RELATED"/>
    <property type="match status" value="1"/>
</dbReference>
<dbReference type="Pfam" id="PF13364">
    <property type="entry name" value="BetaGal_ABD2"/>
    <property type="match status" value="2"/>
</dbReference>
<dbReference type="Pfam" id="PF10435">
    <property type="entry name" value="BetaGal_dom2"/>
    <property type="match status" value="1"/>
</dbReference>
<dbReference type="Pfam" id="PF13363">
    <property type="entry name" value="BetaGal_dom3"/>
    <property type="match status" value="1"/>
</dbReference>
<dbReference type="Pfam" id="PF01301">
    <property type="entry name" value="Glyco_hydro_35"/>
    <property type="match status" value="1"/>
</dbReference>
<dbReference type="PRINTS" id="PR00742">
    <property type="entry name" value="GLHYDRLASE35"/>
</dbReference>
<dbReference type="SMART" id="SM01029">
    <property type="entry name" value="BetaGal_dom2"/>
    <property type="match status" value="1"/>
</dbReference>
<dbReference type="SUPFAM" id="SSF51445">
    <property type="entry name" value="(Trans)glycosidases"/>
    <property type="match status" value="1"/>
</dbReference>
<dbReference type="SUPFAM" id="SSF117100">
    <property type="entry name" value="Beta-galactosidase LacA, domain 3"/>
    <property type="match status" value="1"/>
</dbReference>
<dbReference type="SUPFAM" id="SSF49785">
    <property type="entry name" value="Galactose-binding domain-like"/>
    <property type="match status" value="2"/>
</dbReference>
<dbReference type="SUPFAM" id="SSF51011">
    <property type="entry name" value="Glycosyl hydrolase domain"/>
    <property type="match status" value="1"/>
</dbReference>
<dbReference type="PROSITE" id="PS01182">
    <property type="entry name" value="GLYCOSYL_HYDROL_F35"/>
    <property type="match status" value="1"/>
</dbReference>
<evidence type="ECO:0000250" key="1"/>
<evidence type="ECO:0000255" key="2"/>
<evidence type="ECO:0000305" key="3"/>
<proteinExistence type="inferred from homology"/>
<organism>
    <name type="scientific">Aspergillus fumigatus (strain ATCC MYA-4609 / CBS 101355 / FGSC A1100 / Af293)</name>
    <name type="common">Neosartorya fumigata</name>
    <dbReference type="NCBI Taxonomy" id="330879"/>
    <lineage>
        <taxon>Eukaryota</taxon>
        <taxon>Fungi</taxon>
        <taxon>Dikarya</taxon>
        <taxon>Ascomycota</taxon>
        <taxon>Pezizomycotina</taxon>
        <taxon>Eurotiomycetes</taxon>
        <taxon>Eurotiomycetidae</taxon>
        <taxon>Eurotiales</taxon>
        <taxon>Aspergillaceae</taxon>
        <taxon>Aspergillus</taxon>
        <taxon>Aspergillus subgen. Fumigati</taxon>
    </lineage>
</organism>
<reference key="1">
    <citation type="journal article" date="2005" name="Nature">
        <title>Genomic sequence of the pathogenic and allergenic filamentous fungus Aspergillus fumigatus.</title>
        <authorList>
            <person name="Nierman W.C."/>
            <person name="Pain A."/>
            <person name="Anderson M.J."/>
            <person name="Wortman J.R."/>
            <person name="Kim H.S."/>
            <person name="Arroyo J."/>
            <person name="Berriman M."/>
            <person name="Abe K."/>
            <person name="Archer D.B."/>
            <person name="Bermejo C."/>
            <person name="Bennett J.W."/>
            <person name="Bowyer P."/>
            <person name="Chen D."/>
            <person name="Collins M."/>
            <person name="Coulsen R."/>
            <person name="Davies R."/>
            <person name="Dyer P.S."/>
            <person name="Farman M.L."/>
            <person name="Fedorova N."/>
            <person name="Fedorova N.D."/>
            <person name="Feldblyum T.V."/>
            <person name="Fischer R."/>
            <person name="Fosker N."/>
            <person name="Fraser A."/>
            <person name="Garcia J.L."/>
            <person name="Garcia M.J."/>
            <person name="Goble A."/>
            <person name="Goldman G.H."/>
            <person name="Gomi K."/>
            <person name="Griffith-Jones S."/>
            <person name="Gwilliam R."/>
            <person name="Haas B.J."/>
            <person name="Haas H."/>
            <person name="Harris D.E."/>
            <person name="Horiuchi H."/>
            <person name="Huang J."/>
            <person name="Humphray S."/>
            <person name="Jimenez J."/>
            <person name="Keller N."/>
            <person name="Khouri H."/>
            <person name="Kitamoto K."/>
            <person name="Kobayashi T."/>
            <person name="Konzack S."/>
            <person name="Kulkarni R."/>
            <person name="Kumagai T."/>
            <person name="Lafton A."/>
            <person name="Latge J.-P."/>
            <person name="Li W."/>
            <person name="Lord A."/>
            <person name="Lu C."/>
            <person name="Majoros W.H."/>
            <person name="May G.S."/>
            <person name="Miller B.L."/>
            <person name="Mohamoud Y."/>
            <person name="Molina M."/>
            <person name="Monod M."/>
            <person name="Mouyna I."/>
            <person name="Mulligan S."/>
            <person name="Murphy L.D."/>
            <person name="O'Neil S."/>
            <person name="Paulsen I."/>
            <person name="Penalva M.A."/>
            <person name="Pertea M."/>
            <person name="Price C."/>
            <person name="Pritchard B.L."/>
            <person name="Quail M.A."/>
            <person name="Rabbinowitsch E."/>
            <person name="Rawlins N."/>
            <person name="Rajandream M.A."/>
            <person name="Reichard U."/>
            <person name="Renauld H."/>
            <person name="Robson G.D."/>
            <person name="Rodriguez de Cordoba S."/>
            <person name="Rodriguez-Pena J.M."/>
            <person name="Ronning C.M."/>
            <person name="Rutter S."/>
            <person name="Salzberg S.L."/>
            <person name="Sanchez M."/>
            <person name="Sanchez-Ferrero J.C."/>
            <person name="Saunders D."/>
            <person name="Seeger K."/>
            <person name="Squares R."/>
            <person name="Squares S."/>
            <person name="Takeuchi M."/>
            <person name="Tekaia F."/>
            <person name="Turner G."/>
            <person name="Vazquez de Aldana C.R."/>
            <person name="Weidman J."/>
            <person name="White O."/>
            <person name="Woodward J.R."/>
            <person name="Yu J.-H."/>
            <person name="Fraser C.M."/>
            <person name="Galagan J.E."/>
            <person name="Asai K."/>
            <person name="Machida M."/>
            <person name="Hall N."/>
            <person name="Barrell B.G."/>
            <person name="Denning D.W."/>
        </authorList>
    </citation>
    <scope>NUCLEOTIDE SEQUENCE [LARGE SCALE GENOMIC DNA]</scope>
    <source>
        <strain>ATCC MYA-4609 / CBS 101355 / FGSC A1100 / Af293</strain>
    </source>
</reference>
<feature type="signal peptide" evidence="2">
    <location>
        <begin position="1"/>
        <end position="18"/>
    </location>
</feature>
<feature type="chain" id="PRO_0000395217" description="Probable beta-galactosidase A">
    <location>
        <begin position="19"/>
        <end position="1006"/>
    </location>
</feature>
<feature type="active site" description="Proton donor" evidence="2">
    <location>
        <position position="200"/>
    </location>
</feature>
<feature type="active site" description="Nucleophile" evidence="2">
    <location>
        <position position="298"/>
    </location>
</feature>
<feature type="binding site" evidence="1">
    <location>
        <position position="96"/>
    </location>
    <ligand>
        <name>substrate</name>
    </ligand>
</feature>
<feature type="binding site" evidence="1">
    <location>
        <position position="140"/>
    </location>
    <ligand>
        <name>substrate</name>
    </ligand>
</feature>
<feature type="binding site" evidence="1">
    <location>
        <position position="141"/>
    </location>
    <ligand>
        <name>substrate</name>
    </ligand>
</feature>
<feature type="binding site" evidence="1">
    <location>
        <position position="142"/>
    </location>
    <ligand>
        <name>substrate</name>
    </ligand>
</feature>
<feature type="binding site" evidence="1">
    <location>
        <position position="199"/>
    </location>
    <ligand>
        <name>substrate</name>
    </ligand>
</feature>
<feature type="binding site" evidence="1">
    <location>
        <position position="260"/>
    </location>
    <ligand>
        <name>substrate</name>
    </ligand>
</feature>
<feature type="binding site" evidence="1">
    <location>
        <position position="364"/>
    </location>
    <ligand>
        <name>substrate</name>
    </ligand>
</feature>
<feature type="glycosylation site" description="N-linked (GlcNAc...) asparagine" evidence="2">
    <location>
        <position position="156"/>
    </location>
</feature>
<feature type="glycosylation site" description="N-linked (GlcNAc...) asparagine" evidence="2">
    <location>
        <position position="373"/>
    </location>
</feature>
<feature type="glycosylation site" description="N-linked (GlcNAc...) asparagine" evidence="2">
    <location>
        <position position="402"/>
    </location>
</feature>
<feature type="glycosylation site" description="N-linked (GlcNAc...) asparagine" evidence="2">
    <location>
        <position position="422"/>
    </location>
</feature>
<feature type="glycosylation site" description="N-linked (GlcNAc...) asparagine" evidence="2">
    <location>
        <position position="622"/>
    </location>
</feature>
<feature type="glycosylation site" description="N-linked (GlcNAc...) asparagine" evidence="2">
    <location>
        <position position="760"/>
    </location>
</feature>
<feature type="glycosylation site" description="N-linked (GlcNAc...) asparagine" evidence="2">
    <location>
        <position position="777"/>
    </location>
</feature>
<feature type="glycosylation site" description="N-linked (GlcNAc...) asparagine" evidence="2">
    <location>
        <position position="914"/>
    </location>
</feature>
<feature type="disulfide bond" evidence="1">
    <location>
        <begin position="205"/>
        <end position="206"/>
    </location>
</feature>
<feature type="disulfide bond" evidence="1">
    <location>
        <begin position="266"/>
        <end position="315"/>
    </location>
</feature>
<sequence>MKLLSVCAIALLAAQAAGASIKHMLNGFTLMEHSDPAKRELLQKYVTWDEKSLFVNGERIMIFSGEVHPFRLPVPSLWLDVFQKIKALGFNCVSFYVDWALLEGKPGEYRAEGNFALEPFFDVAKQAGIYLLARPGPYINAEASGGGFPGWLQRVNGTLRTSDPAYLKATDNYIAHVAATIAKGQITNGGPVILYQPENEYSGACCDATFPDGDYMQYVIDQARNAGIVVPLINNDAWTGGHNAPGTGKGEVDIYGHDSYPLGFDCGHPSVWPKGNLPTTFRTDHLKQSPTTPYSLIEFQAGSFDPWGGPGFAACAALVNHEFERVFYKNDLSFGAAILNLYMTFGGTNWGNLGHPGGYTSYDYGSPLTESRNVTREKYSELKLIGNFVKASPSYLLATPGNLTTSGYADTADLTVTPLLGNGTGSYFVVRHTDYTSQASTPYKLSLPTSAGRLTVPQLGGTLTLNGRDSKIHVVDYNVAGTNIIYSTAEVFTWKNFGDSKVLILYGGPGEHHELAVSLKSDVQVVEGSNSEFKSKKVGDVVVVAWDVSPSRRIVQIGDLKIFLLDRNSVYNYWVPQLDKDDSSTGYSSEKTTASSIIVKAGYLVRTAYTKGSGLYLTADFNATTPVEVIGAPSNVRNLYINGEKTQFKTDKNGIWSTEVKYSAPKIKLPSMKDLDWKYLDTLQEVQSTYDDSAWPAADLDTTPNTLRPLTTPKSLYSSDYGFHTGYLIYRGHFVADGSETTFDVRTQGGSAFGSSVWLNESFLGSWTGLNANADYNSTYKLPQVEQGKNYVLTILIDTMGLNENWVVGTDEMKNPRGILSYKLSGRDASAITWKLTGNLGGEDYQDKIRGPLNEGGLYAERQGFHQPQPPSQKWKSASPLDGLSKPGIGFYTAQFDLDIPSGWDVPLYFNFGNSTKSAYRVQLYVNGYQYGKFVSNIGPQTSFPVPQGILNYQGTNWVALTLWALESDGAKLDDFELVNTTPVMTALSKIRPSKQPNYRQRKGAY</sequence>
<accession>Q4WS33</accession>
<comment type="function">
    <text evidence="1">Cleaves beta-linked terminal galactosyl residues from gangliosides, glycoproteins, and glycosaminoglycans.</text>
</comment>
<comment type="catalytic activity">
    <reaction>
        <text>Hydrolysis of terminal non-reducing beta-D-galactose residues in beta-D-galactosides.</text>
        <dbReference type="EC" id="3.2.1.23"/>
    </reaction>
</comment>
<comment type="subcellular location">
    <subcellularLocation>
        <location evidence="1">Secreted</location>
    </subcellularLocation>
</comment>
<comment type="similarity">
    <text evidence="3">Belongs to the glycosyl hydrolase 35 family.</text>
</comment>
<comment type="sequence caution" evidence="3">
    <conflict type="erroneous gene model prediction">
        <sequence resource="EMBL-CDS" id="EAL90749"/>
    </conflict>
</comment>
<name>BGALA_ASPFU</name>
<gene>
    <name type="primary">lacA</name>
    <name type="ORF">AFUA_1G14170</name>
</gene>
<protein>
    <recommendedName>
        <fullName>Probable beta-galactosidase A</fullName>
        <ecNumber>3.2.1.23</ecNumber>
    </recommendedName>
    <alternativeName>
        <fullName>Lactase A</fullName>
    </alternativeName>
</protein>